<sequence length="603" mass="70062">MSTISINHVGLLRNPLHGKSKRASINKSWSLCLPRSSSASRLVKPCRVSSKTDTKPAEMTRRSGNYEPSLWDFDFIQSLDNHHPHVKEKQLKREEELIVEVKMLLGTKIEAVKQLELIDDLKNLGLSYFFRDEIKMVLTSIYNNFFENKNNQVGDLYFTALGFRLLRQHGFNVSQEIFDCFKNEKGSDFDETLIGEDTKATLQLYEASFHLREGENTLELARQISTKYLQKKVDEGSINDENLSSWIRHSLDLPLHWRIQRLEARWFLDAYAAREDKNPLIFELTKLDFNIIQATQQEELKEVSRWWNNSRLAEKLPFVRDRVVECYFWAVGLFDGHDYGFQRKVNAAVNILITAIDDVYDVYGTLDELRLFTDVIRRWDTQSIDQLPYYMQLCYLTLYNYVSDLAYNILKDRGINTIPHLHQSWVNTVEAYLKEAEWYESGYAPSLEEYLSIASISIGVIPIVIPLEVSIPNSTFHRRSPFEYHRYDILHLSAMVLRLADDLGTAQYEVETGDVPKAVQCYIKDTNASEEEAREHVRFMIGEVWKELNTAMAESDDCPFTEQGAWAAVNIGRAAQFIYLEGDGHGRFQIHQHMENLFFHPCV</sequence>
<evidence type="ECO:0000250" key="1">
    <source>
        <dbReference type="UniProtKB" id="A0A0M3Q1Q3"/>
    </source>
</evidence>
<evidence type="ECO:0000250" key="2">
    <source>
        <dbReference type="UniProtKB" id="A0A1C9J6A7"/>
    </source>
</evidence>
<evidence type="ECO:0000250" key="3">
    <source>
        <dbReference type="UniProtKB" id="E2E2P0"/>
    </source>
</evidence>
<evidence type="ECO:0000250" key="4">
    <source>
        <dbReference type="UniProtKB" id="Q9X839"/>
    </source>
</evidence>
<evidence type="ECO:0000255" key="5"/>
<evidence type="ECO:0000269" key="6">
    <source>
    </source>
</evidence>
<evidence type="ECO:0000303" key="7">
    <source>
    </source>
</evidence>
<evidence type="ECO:0000305" key="8"/>
<reference key="1">
    <citation type="journal article" date="2013" name="Arch. Biochem. Biophys.">
        <title>Stereochemical mechanism of two sabinene hydrate synthases forming antipodal monoterpenes in thyme (Thymus vulgaris).</title>
        <authorList>
            <person name="Krause S.T."/>
            <person name="Koellner T.G."/>
            <person name="Asbach J."/>
            <person name="Degenhardt J."/>
        </authorList>
    </citation>
    <scope>NUCLEOTIDE SEQUENCE [MRNA]</scope>
    <scope>FUNCTION</scope>
    <scope>MUTAGENESIS OF ASN-350</scope>
    <scope>CATALYTIC ACTIVITY</scope>
    <scope>PATHWAY</scope>
    <scope>BIOPHYSICOCHEMICAL PROPERTIES</scope>
</reference>
<name>SBHS6_THYVU</name>
<gene>
    <name evidence="7" type="primary">TPS6</name>
</gene>
<organism>
    <name type="scientific">Thymus vulgaris</name>
    <name type="common">Thyme</name>
    <dbReference type="NCBI Taxonomy" id="49992"/>
    <lineage>
        <taxon>Eukaryota</taxon>
        <taxon>Viridiplantae</taxon>
        <taxon>Streptophyta</taxon>
        <taxon>Embryophyta</taxon>
        <taxon>Tracheophyta</taxon>
        <taxon>Spermatophyta</taxon>
        <taxon>Magnoliopsida</taxon>
        <taxon>eudicotyledons</taxon>
        <taxon>Gunneridae</taxon>
        <taxon>Pentapetalae</taxon>
        <taxon>asterids</taxon>
        <taxon>lamiids</taxon>
        <taxon>Lamiales</taxon>
        <taxon>Lamiaceae</taxon>
        <taxon>Nepetoideae</taxon>
        <taxon>Mentheae</taxon>
        <taxon>Thymus</taxon>
    </lineage>
</organism>
<keyword id="KW-0150">Chloroplast</keyword>
<keyword id="KW-0456">Lyase</keyword>
<keyword id="KW-0460">Magnesium</keyword>
<keyword id="KW-0464">Manganese</keyword>
<keyword id="KW-0479">Metal-binding</keyword>
<keyword id="KW-0934">Plastid</keyword>
<keyword id="KW-0809">Transit peptide</keyword>
<proteinExistence type="evidence at protein level"/>
<dbReference type="EC" id="4.2.3.11" evidence="6"/>
<dbReference type="EMBL" id="JX946357">
    <property type="protein sequence ID" value="AGA96119.1"/>
    <property type="molecule type" value="mRNA"/>
</dbReference>
<dbReference type="SMR" id="L0HAM7"/>
<dbReference type="BRENDA" id="4.2.3.11">
    <property type="organism ID" value="12984"/>
</dbReference>
<dbReference type="UniPathway" id="UPA00213"/>
<dbReference type="GO" id="GO:0009507">
    <property type="term" value="C:chloroplast"/>
    <property type="evidence" value="ECO:0007669"/>
    <property type="project" value="UniProtKB-SubCell"/>
</dbReference>
<dbReference type="GO" id="GO:0000287">
    <property type="term" value="F:magnesium ion binding"/>
    <property type="evidence" value="ECO:0007669"/>
    <property type="project" value="InterPro"/>
</dbReference>
<dbReference type="GO" id="GO:0042803">
    <property type="term" value="F:protein homodimerization activity"/>
    <property type="evidence" value="ECO:0000250"/>
    <property type="project" value="UniProtKB"/>
</dbReference>
<dbReference type="GO" id="GO:0050469">
    <property type="term" value="F:sabinene-hydrate synthase activity"/>
    <property type="evidence" value="ECO:0007669"/>
    <property type="project" value="UniProtKB-EC"/>
</dbReference>
<dbReference type="GO" id="GO:0010333">
    <property type="term" value="F:terpene synthase activity"/>
    <property type="evidence" value="ECO:0007669"/>
    <property type="project" value="InterPro"/>
</dbReference>
<dbReference type="GO" id="GO:0016102">
    <property type="term" value="P:diterpenoid biosynthetic process"/>
    <property type="evidence" value="ECO:0007669"/>
    <property type="project" value="InterPro"/>
</dbReference>
<dbReference type="CDD" id="cd00684">
    <property type="entry name" value="Terpene_cyclase_plant_C1"/>
    <property type="match status" value="1"/>
</dbReference>
<dbReference type="FunFam" id="1.10.600.10:FF:000007">
    <property type="entry name" value="Isoprene synthase, chloroplastic"/>
    <property type="match status" value="1"/>
</dbReference>
<dbReference type="FunFam" id="1.50.10.130:FF:000001">
    <property type="entry name" value="Isoprene synthase, chloroplastic"/>
    <property type="match status" value="1"/>
</dbReference>
<dbReference type="Gene3D" id="1.10.600.10">
    <property type="entry name" value="Farnesyl Diphosphate Synthase"/>
    <property type="match status" value="1"/>
</dbReference>
<dbReference type="Gene3D" id="1.50.10.130">
    <property type="entry name" value="Terpene synthase, N-terminal domain"/>
    <property type="match status" value="1"/>
</dbReference>
<dbReference type="InterPro" id="IPR008949">
    <property type="entry name" value="Isoprenoid_synthase_dom_sf"/>
</dbReference>
<dbReference type="InterPro" id="IPR034741">
    <property type="entry name" value="Terpene_cyclase-like_1_C"/>
</dbReference>
<dbReference type="InterPro" id="IPR044814">
    <property type="entry name" value="Terpene_cyclase_plant_C1"/>
</dbReference>
<dbReference type="InterPro" id="IPR001906">
    <property type="entry name" value="Terpene_synth_N"/>
</dbReference>
<dbReference type="InterPro" id="IPR036965">
    <property type="entry name" value="Terpene_synth_N_sf"/>
</dbReference>
<dbReference type="InterPro" id="IPR050148">
    <property type="entry name" value="Terpene_synthase-like"/>
</dbReference>
<dbReference type="InterPro" id="IPR005630">
    <property type="entry name" value="Terpene_synthase_metal-bd"/>
</dbReference>
<dbReference type="InterPro" id="IPR008930">
    <property type="entry name" value="Terpenoid_cyclase/PrenylTrfase"/>
</dbReference>
<dbReference type="PANTHER" id="PTHR31225">
    <property type="entry name" value="OS04G0344100 PROTEIN-RELATED"/>
    <property type="match status" value="1"/>
</dbReference>
<dbReference type="PANTHER" id="PTHR31225:SF9">
    <property type="entry name" value="TERPENE SYNTHASE 10"/>
    <property type="match status" value="1"/>
</dbReference>
<dbReference type="Pfam" id="PF01397">
    <property type="entry name" value="Terpene_synth"/>
    <property type="match status" value="1"/>
</dbReference>
<dbReference type="Pfam" id="PF03936">
    <property type="entry name" value="Terpene_synth_C"/>
    <property type="match status" value="1"/>
</dbReference>
<dbReference type="SFLD" id="SFLDS00005">
    <property type="entry name" value="Isoprenoid_Synthase_Type_I"/>
    <property type="match status" value="1"/>
</dbReference>
<dbReference type="SFLD" id="SFLDG01019">
    <property type="entry name" value="Terpene_Cyclase_Like_1_C_Termi"/>
    <property type="match status" value="1"/>
</dbReference>
<dbReference type="SFLD" id="SFLDG01014">
    <property type="entry name" value="Terpene_Cyclase_Like_1_N-term"/>
    <property type="match status" value="1"/>
</dbReference>
<dbReference type="SUPFAM" id="SSF48239">
    <property type="entry name" value="Terpenoid cyclases/Protein prenyltransferases"/>
    <property type="match status" value="1"/>
</dbReference>
<dbReference type="SUPFAM" id="SSF48576">
    <property type="entry name" value="Terpenoid synthases"/>
    <property type="match status" value="1"/>
</dbReference>
<feature type="transit peptide" description="Chloroplast" evidence="5">
    <location>
        <begin position="1"/>
        <end position="47"/>
    </location>
</feature>
<feature type="chain" id="PRO_0000453312" description="Sabinene hydrate synthase, chloroplastic">
    <location>
        <begin position="48"/>
        <end position="603"/>
    </location>
</feature>
<feature type="region of interest" description="Homodimerization" evidence="1">
    <location>
        <begin position="363"/>
        <end position="369"/>
    </location>
</feature>
<feature type="region of interest" description="Homodimerization" evidence="1">
    <location>
        <begin position="435"/>
        <end position="472"/>
    </location>
</feature>
<feature type="short sequence motif" description="DDXXD motif" evidence="4">
    <location>
        <begin position="357"/>
        <end position="361"/>
    </location>
</feature>
<feature type="binding site" evidence="2">
    <location>
        <position position="357"/>
    </location>
    <ligand>
        <name>Mn(2+)</name>
        <dbReference type="ChEBI" id="CHEBI:29035"/>
        <label>1</label>
    </ligand>
</feature>
<feature type="binding site" evidence="2">
    <location>
        <position position="357"/>
    </location>
    <ligand>
        <name>Mn(2+)</name>
        <dbReference type="ChEBI" id="CHEBI:29035"/>
        <label>2</label>
    </ligand>
</feature>
<feature type="binding site" evidence="2">
    <location>
        <position position="361"/>
    </location>
    <ligand>
        <name>Mn(2+)</name>
        <dbReference type="ChEBI" id="CHEBI:29035"/>
        <label>1</label>
    </ligand>
</feature>
<feature type="binding site" evidence="2">
    <location>
        <position position="361"/>
    </location>
    <ligand>
        <name>Mn(2+)</name>
        <dbReference type="ChEBI" id="CHEBI:29035"/>
        <label>2</label>
    </ligand>
</feature>
<feature type="binding site" evidence="2">
    <location>
        <position position="501"/>
    </location>
    <ligand>
        <name>Mn(2+)</name>
        <dbReference type="ChEBI" id="CHEBI:29035"/>
        <label>3</label>
    </ligand>
</feature>
<feature type="binding site" evidence="2">
    <location>
        <position position="509"/>
    </location>
    <ligand>
        <name>Mn(2+)</name>
        <dbReference type="ChEBI" id="CHEBI:29035"/>
        <label>3</label>
    </ligand>
</feature>
<feature type="site" description="Confers reaction mechanism stereospecificity" evidence="6">
    <location>
        <position position="350"/>
    </location>
</feature>
<feature type="mutagenesis site" description="Lossed ability to produce (Z)-sabinene hydrate but increased ability to produce (E)-sabinene from geranyl diphosphate (GPP)." evidence="6">
    <original>N</original>
    <variation>I</variation>
    <location>
        <position position="350"/>
    </location>
</feature>
<accession>L0HAM7</accession>
<protein>
    <recommendedName>
        <fullName evidence="7">Sabinene hydrate synthase, chloroplastic</fullName>
        <ecNumber evidence="6">4.2.3.11</ecNumber>
    </recommendedName>
    <alternativeName>
        <fullName evidence="7">Terpene synthase 6</fullName>
        <shortName evidence="7">TvTPS6</shortName>
    </alternativeName>
</protein>
<comment type="function">
    <text evidence="6">Involved in the biosynthesis of phenolic monoterpenes natural products (PubMed:23246843). Monoterpene synthase which catalyzes the conversion of geranyl diphosphate (GPP) to sabinene hydrate, mainly (Z)-sabinene hydrate and to a lower extent (E)-sabinene hydrate, and the formation of minor amounts and traces of several other monoterpenes (e.g. mainly alpha-thujene, alpha-pinene and myrcene) (PubMed:23246843).</text>
</comment>
<comment type="catalytic activity">
    <reaction evidence="6">
        <text>(2E)-geranyl diphosphate + H2O = sabinene hydrate + diphosphate</text>
        <dbReference type="Rhea" id="RHEA:19565"/>
        <dbReference type="ChEBI" id="CHEBI:15377"/>
        <dbReference type="ChEBI" id="CHEBI:16377"/>
        <dbReference type="ChEBI" id="CHEBI:33019"/>
        <dbReference type="ChEBI" id="CHEBI:58057"/>
        <dbReference type="EC" id="4.2.3.11"/>
    </reaction>
    <physiologicalReaction direction="left-to-right" evidence="6">
        <dbReference type="Rhea" id="RHEA:19566"/>
    </physiologicalReaction>
</comment>
<comment type="cofactor">
    <cofactor evidence="3">
        <name>Mn(2+)</name>
        <dbReference type="ChEBI" id="CHEBI:29035"/>
    </cofactor>
    <cofactor evidence="3">
        <name>Mg(2+)</name>
        <dbReference type="ChEBI" id="CHEBI:18420"/>
    </cofactor>
    <text evidence="3">Binds 3 Mg(2+) or Mn(2+) ions per subunit.</text>
</comment>
<comment type="biophysicochemical properties">
    <kinetics>
        <KM evidence="6">33.5 uM for geranyl diphosphate</KM>
    </kinetics>
</comment>
<comment type="pathway">
    <text evidence="6">Secondary metabolite biosynthesis; terpenoid biosynthesis.</text>
</comment>
<comment type="subunit">
    <text evidence="1">Homodimer.</text>
</comment>
<comment type="subcellular location">
    <subcellularLocation>
        <location evidence="5">Plastid</location>
        <location evidence="5">Chloroplast</location>
    </subcellularLocation>
</comment>
<comment type="domain">
    <text evidence="4">The Asp-Asp-Xaa-Xaa-Asp/Glu (DDXXD/E) motif is important for the catalytic activity, presumably through binding to Mg(2+).</text>
</comment>
<comment type="similarity">
    <text evidence="8">Belongs to the terpene synthase family.</text>
</comment>